<proteinExistence type="inferred from homology"/>
<organism>
    <name type="scientific">Salmonella choleraesuis (strain SC-B67)</name>
    <dbReference type="NCBI Taxonomy" id="321314"/>
    <lineage>
        <taxon>Bacteria</taxon>
        <taxon>Pseudomonadati</taxon>
        <taxon>Pseudomonadota</taxon>
        <taxon>Gammaproteobacteria</taxon>
        <taxon>Enterobacterales</taxon>
        <taxon>Enterobacteriaceae</taxon>
        <taxon>Salmonella</taxon>
    </lineage>
</organism>
<gene>
    <name evidence="1" type="primary">ychJ</name>
    <name type="ordered locus">SCH_1750</name>
</gene>
<comment type="similarity">
    <text evidence="1">Belongs to the UPF0225 family.</text>
</comment>
<accession>Q57NQ5</accession>
<name>YCHJ_SALCH</name>
<reference key="1">
    <citation type="journal article" date="2005" name="Nucleic Acids Res.">
        <title>The genome sequence of Salmonella enterica serovar Choleraesuis, a highly invasive and resistant zoonotic pathogen.</title>
        <authorList>
            <person name="Chiu C.-H."/>
            <person name="Tang P."/>
            <person name="Chu C."/>
            <person name="Hu S."/>
            <person name="Bao Q."/>
            <person name="Yu J."/>
            <person name="Chou Y.-Y."/>
            <person name="Wang H.-S."/>
            <person name="Lee Y.-S."/>
        </authorList>
    </citation>
    <scope>NUCLEOTIDE SEQUENCE [LARGE SCALE GENOMIC DNA]</scope>
    <source>
        <strain>SC-B67</strain>
    </source>
</reference>
<dbReference type="EMBL" id="AE017220">
    <property type="protein sequence ID" value="AAX65656.1"/>
    <property type="molecule type" value="Genomic_DNA"/>
</dbReference>
<dbReference type="RefSeq" id="WP_001540172.1">
    <property type="nucleotide sequence ID" value="NC_006905.1"/>
</dbReference>
<dbReference type="SMR" id="Q57NQ5"/>
<dbReference type="KEGG" id="sec:SCH_1750"/>
<dbReference type="HOGENOM" id="CLU_099590_0_0_6"/>
<dbReference type="Proteomes" id="UP000000538">
    <property type="component" value="Chromosome"/>
</dbReference>
<dbReference type="Gene3D" id="3.10.450.50">
    <property type="match status" value="1"/>
</dbReference>
<dbReference type="HAMAP" id="MF_00612">
    <property type="entry name" value="UPF0225"/>
    <property type="match status" value="1"/>
</dbReference>
<dbReference type="InterPro" id="IPR032710">
    <property type="entry name" value="NTF2-like_dom_sf"/>
</dbReference>
<dbReference type="InterPro" id="IPR004027">
    <property type="entry name" value="SEC_C_motif"/>
</dbReference>
<dbReference type="InterPro" id="IPR023006">
    <property type="entry name" value="UPF0225"/>
</dbReference>
<dbReference type="InterPro" id="IPR048469">
    <property type="entry name" value="YchJ-like_M"/>
</dbReference>
<dbReference type="NCBIfam" id="NF002449">
    <property type="entry name" value="PRK01617.1"/>
    <property type="match status" value="1"/>
</dbReference>
<dbReference type="NCBIfam" id="NF002486">
    <property type="entry name" value="PRK01752.1"/>
    <property type="match status" value="1"/>
</dbReference>
<dbReference type="PANTHER" id="PTHR33747:SF1">
    <property type="entry name" value="ADENYLATE CYCLASE-ASSOCIATED CAP C-TERMINAL DOMAIN-CONTAINING PROTEIN"/>
    <property type="match status" value="1"/>
</dbReference>
<dbReference type="PANTHER" id="PTHR33747">
    <property type="entry name" value="UPF0225 PROTEIN SCO1677"/>
    <property type="match status" value="1"/>
</dbReference>
<dbReference type="Pfam" id="PF02810">
    <property type="entry name" value="SEC-C"/>
    <property type="match status" value="2"/>
</dbReference>
<dbReference type="Pfam" id="PF17775">
    <property type="entry name" value="YchJ_M-like"/>
    <property type="match status" value="1"/>
</dbReference>
<dbReference type="SUPFAM" id="SSF54427">
    <property type="entry name" value="NTF2-like"/>
    <property type="match status" value="1"/>
</dbReference>
<dbReference type="SUPFAM" id="SSF103642">
    <property type="entry name" value="Sec-C motif"/>
    <property type="match status" value="1"/>
</dbReference>
<sequence length="152" mass="17052">MSQPCPCGSADEYSLCCGRIVSGERVAPDPSHLMRSRYCAFVMKDADYLIKSWHPTCNAAAFRDDIIAGFANTRWLGLTIFEHTWSEAENTGYVSFIARFSEQGKTGAIIERSRFIKENGQWYYIDGTRPQLGRNDPCPCGSGKKFKKCCGQ</sequence>
<feature type="chain" id="PRO_1000056736" description="UPF0225 protein YchJ">
    <location>
        <begin position="1"/>
        <end position="152"/>
    </location>
</feature>
<evidence type="ECO:0000255" key="1">
    <source>
        <dbReference type="HAMAP-Rule" id="MF_00612"/>
    </source>
</evidence>
<protein>
    <recommendedName>
        <fullName evidence="1">UPF0225 protein YchJ</fullName>
    </recommendedName>
</protein>